<evidence type="ECO:0000255" key="1">
    <source>
        <dbReference type="HAMAP-Rule" id="MF_00061"/>
    </source>
</evidence>
<organism>
    <name type="scientific">Xanthomonas campestris pv. campestris (strain ATCC 33913 / DSM 3586 / NCPPB 528 / LMG 568 / P 25)</name>
    <dbReference type="NCBI Taxonomy" id="190485"/>
    <lineage>
        <taxon>Bacteria</taxon>
        <taxon>Pseudomonadati</taxon>
        <taxon>Pseudomonadota</taxon>
        <taxon>Gammaproteobacteria</taxon>
        <taxon>Lysobacterales</taxon>
        <taxon>Lysobacteraceae</taxon>
        <taxon>Xanthomonas</taxon>
    </lineage>
</organism>
<comment type="function">
    <text evidence="1">Catalyzes the phosphorylation of the position 2 hydroxy group of 4-diphosphocytidyl-2C-methyl-D-erythritol.</text>
</comment>
<comment type="catalytic activity">
    <reaction evidence="1">
        <text>4-CDP-2-C-methyl-D-erythritol + ATP = 4-CDP-2-C-methyl-D-erythritol 2-phosphate + ADP + H(+)</text>
        <dbReference type="Rhea" id="RHEA:18437"/>
        <dbReference type="ChEBI" id="CHEBI:15378"/>
        <dbReference type="ChEBI" id="CHEBI:30616"/>
        <dbReference type="ChEBI" id="CHEBI:57823"/>
        <dbReference type="ChEBI" id="CHEBI:57919"/>
        <dbReference type="ChEBI" id="CHEBI:456216"/>
        <dbReference type="EC" id="2.7.1.148"/>
    </reaction>
</comment>
<comment type="pathway">
    <text evidence="1">Isoprenoid biosynthesis; isopentenyl diphosphate biosynthesis via DXP pathway; isopentenyl diphosphate from 1-deoxy-D-xylulose 5-phosphate: step 3/6.</text>
</comment>
<comment type="similarity">
    <text evidence="1">Belongs to the GHMP kinase family. IspE subfamily.</text>
</comment>
<gene>
    <name evidence="1" type="primary">ispE</name>
    <name type="synonym">ipk</name>
    <name type="ordered locus">XCC0871</name>
</gene>
<sequence>MDALALMSASNPAWSAWPAPAKLNLFLQIVGRRADGYHLLQTVFRLLDWGDTVHVRLRTDGQIQRIGASLPGVAEDDDLMVRAARALQIHAGTALGAELRVDKRIPAGGGFGGGSSDAATVLVALNALWGLGLPVDTLAELGLRLGADVPVFVRGHNAWAEGVGEKLTPISLPQAAYVLVDPGIHVPTPVLFQSQELTRDAAPAKIADFASGSLLDNAFEPVLRRREPAIEAVFQALSRIGTPRLTGSGSGCFVEFATRAAAEQAMAHLPGNLRAWVVEGAAHSPLLDALDAIQV</sequence>
<accession>Q8PC64</accession>
<reference key="1">
    <citation type="journal article" date="2002" name="Nature">
        <title>Comparison of the genomes of two Xanthomonas pathogens with differing host specificities.</title>
        <authorList>
            <person name="da Silva A.C.R."/>
            <person name="Ferro J.A."/>
            <person name="Reinach F.C."/>
            <person name="Farah C.S."/>
            <person name="Furlan L.R."/>
            <person name="Quaggio R.B."/>
            <person name="Monteiro-Vitorello C.B."/>
            <person name="Van Sluys M.A."/>
            <person name="Almeida N.F. Jr."/>
            <person name="Alves L.M.C."/>
            <person name="do Amaral A.M."/>
            <person name="Bertolini M.C."/>
            <person name="Camargo L.E.A."/>
            <person name="Camarotte G."/>
            <person name="Cannavan F."/>
            <person name="Cardozo J."/>
            <person name="Chambergo F."/>
            <person name="Ciapina L.P."/>
            <person name="Cicarelli R.M.B."/>
            <person name="Coutinho L.L."/>
            <person name="Cursino-Santos J.R."/>
            <person name="El-Dorry H."/>
            <person name="Faria J.B."/>
            <person name="Ferreira A.J.S."/>
            <person name="Ferreira R.C.C."/>
            <person name="Ferro M.I.T."/>
            <person name="Formighieri E.F."/>
            <person name="Franco M.C."/>
            <person name="Greggio C.C."/>
            <person name="Gruber A."/>
            <person name="Katsuyama A.M."/>
            <person name="Kishi L.T."/>
            <person name="Leite R.P."/>
            <person name="Lemos E.G.M."/>
            <person name="Lemos M.V.F."/>
            <person name="Locali E.C."/>
            <person name="Machado M.A."/>
            <person name="Madeira A.M.B.N."/>
            <person name="Martinez-Rossi N.M."/>
            <person name="Martins E.C."/>
            <person name="Meidanis J."/>
            <person name="Menck C.F.M."/>
            <person name="Miyaki C.Y."/>
            <person name="Moon D.H."/>
            <person name="Moreira L.M."/>
            <person name="Novo M.T.M."/>
            <person name="Okura V.K."/>
            <person name="Oliveira M.C."/>
            <person name="Oliveira V.R."/>
            <person name="Pereira H.A."/>
            <person name="Rossi A."/>
            <person name="Sena J.A.D."/>
            <person name="Silva C."/>
            <person name="de Souza R.F."/>
            <person name="Spinola L.A.F."/>
            <person name="Takita M.A."/>
            <person name="Tamura R.E."/>
            <person name="Teixeira E.C."/>
            <person name="Tezza R.I.D."/>
            <person name="Trindade dos Santos M."/>
            <person name="Truffi D."/>
            <person name="Tsai S.M."/>
            <person name="White F.F."/>
            <person name="Setubal J.C."/>
            <person name="Kitajima J.P."/>
        </authorList>
    </citation>
    <scope>NUCLEOTIDE SEQUENCE [LARGE SCALE GENOMIC DNA]</scope>
    <source>
        <strain>ATCC 33913 / DSM 3586 / NCPPB 528 / LMG 568 / P 25</strain>
    </source>
</reference>
<proteinExistence type="inferred from homology"/>
<name>ISPE_XANCP</name>
<dbReference type="EC" id="2.7.1.148" evidence="1"/>
<dbReference type="EMBL" id="AE008922">
    <property type="protein sequence ID" value="AAM40186.1"/>
    <property type="molecule type" value="Genomic_DNA"/>
</dbReference>
<dbReference type="RefSeq" id="NP_636262.1">
    <property type="nucleotide sequence ID" value="NC_003902.1"/>
</dbReference>
<dbReference type="RefSeq" id="WP_011036107.1">
    <property type="nucleotide sequence ID" value="NC_003902.1"/>
</dbReference>
<dbReference type="SMR" id="Q8PC64"/>
<dbReference type="STRING" id="190485.XCC0871"/>
<dbReference type="EnsemblBacteria" id="AAM40186">
    <property type="protein sequence ID" value="AAM40186"/>
    <property type="gene ID" value="XCC0871"/>
</dbReference>
<dbReference type="KEGG" id="xcc:XCC0871"/>
<dbReference type="PATRIC" id="fig|190485.4.peg.947"/>
<dbReference type="eggNOG" id="COG1947">
    <property type="taxonomic scope" value="Bacteria"/>
</dbReference>
<dbReference type="HOGENOM" id="CLU_053057_3_0_6"/>
<dbReference type="OrthoDB" id="9809438at2"/>
<dbReference type="UniPathway" id="UPA00056">
    <property type="reaction ID" value="UER00094"/>
</dbReference>
<dbReference type="Proteomes" id="UP000001010">
    <property type="component" value="Chromosome"/>
</dbReference>
<dbReference type="GO" id="GO:0050515">
    <property type="term" value="F:4-(cytidine 5'-diphospho)-2-C-methyl-D-erythritol kinase activity"/>
    <property type="evidence" value="ECO:0000318"/>
    <property type="project" value="GO_Central"/>
</dbReference>
<dbReference type="GO" id="GO:0005524">
    <property type="term" value="F:ATP binding"/>
    <property type="evidence" value="ECO:0007669"/>
    <property type="project" value="UniProtKB-UniRule"/>
</dbReference>
<dbReference type="GO" id="GO:0019288">
    <property type="term" value="P:isopentenyl diphosphate biosynthetic process, methylerythritol 4-phosphate pathway"/>
    <property type="evidence" value="ECO:0007669"/>
    <property type="project" value="UniProtKB-UniRule"/>
</dbReference>
<dbReference type="GO" id="GO:0016114">
    <property type="term" value="P:terpenoid biosynthetic process"/>
    <property type="evidence" value="ECO:0007669"/>
    <property type="project" value="InterPro"/>
</dbReference>
<dbReference type="FunFam" id="3.30.230.10:FF:000022">
    <property type="entry name" value="4-diphosphocytidyl-2-C-methyl-D-erythritol kinase"/>
    <property type="match status" value="1"/>
</dbReference>
<dbReference type="FunFam" id="3.30.70.890:FF:000014">
    <property type="entry name" value="4-diphosphocytidyl-2-C-methyl-D-erythritol kinase"/>
    <property type="match status" value="1"/>
</dbReference>
<dbReference type="Gene3D" id="3.30.230.10">
    <property type="match status" value="1"/>
</dbReference>
<dbReference type="Gene3D" id="3.30.70.890">
    <property type="entry name" value="GHMP kinase, C-terminal domain"/>
    <property type="match status" value="1"/>
</dbReference>
<dbReference type="HAMAP" id="MF_00061">
    <property type="entry name" value="IspE"/>
    <property type="match status" value="1"/>
</dbReference>
<dbReference type="InterPro" id="IPR013750">
    <property type="entry name" value="GHMP_kinase_C_dom"/>
</dbReference>
<dbReference type="InterPro" id="IPR036554">
    <property type="entry name" value="GHMP_kinase_C_sf"/>
</dbReference>
<dbReference type="InterPro" id="IPR006204">
    <property type="entry name" value="GHMP_kinase_N_dom"/>
</dbReference>
<dbReference type="InterPro" id="IPR004424">
    <property type="entry name" value="IspE"/>
</dbReference>
<dbReference type="InterPro" id="IPR020568">
    <property type="entry name" value="Ribosomal_Su5_D2-typ_SF"/>
</dbReference>
<dbReference type="InterPro" id="IPR014721">
    <property type="entry name" value="Ribsml_uS5_D2-typ_fold_subgr"/>
</dbReference>
<dbReference type="NCBIfam" id="TIGR00154">
    <property type="entry name" value="ispE"/>
    <property type="match status" value="1"/>
</dbReference>
<dbReference type="PANTHER" id="PTHR43527">
    <property type="entry name" value="4-DIPHOSPHOCYTIDYL-2-C-METHYL-D-ERYTHRITOL KINASE, CHLOROPLASTIC"/>
    <property type="match status" value="1"/>
</dbReference>
<dbReference type="PANTHER" id="PTHR43527:SF2">
    <property type="entry name" value="4-DIPHOSPHOCYTIDYL-2-C-METHYL-D-ERYTHRITOL KINASE, CHLOROPLASTIC"/>
    <property type="match status" value="1"/>
</dbReference>
<dbReference type="Pfam" id="PF08544">
    <property type="entry name" value="GHMP_kinases_C"/>
    <property type="match status" value="1"/>
</dbReference>
<dbReference type="Pfam" id="PF00288">
    <property type="entry name" value="GHMP_kinases_N"/>
    <property type="match status" value="1"/>
</dbReference>
<dbReference type="PIRSF" id="PIRSF010376">
    <property type="entry name" value="IspE"/>
    <property type="match status" value="1"/>
</dbReference>
<dbReference type="SUPFAM" id="SSF55060">
    <property type="entry name" value="GHMP Kinase, C-terminal domain"/>
    <property type="match status" value="1"/>
</dbReference>
<dbReference type="SUPFAM" id="SSF54211">
    <property type="entry name" value="Ribosomal protein S5 domain 2-like"/>
    <property type="match status" value="1"/>
</dbReference>
<feature type="chain" id="PRO_0000189292" description="4-diphosphocytidyl-2-C-methyl-D-erythritol kinase">
    <location>
        <begin position="1"/>
        <end position="295"/>
    </location>
</feature>
<feature type="active site" evidence="1">
    <location>
        <position position="22"/>
    </location>
</feature>
<feature type="active site" evidence="1">
    <location>
        <position position="148"/>
    </location>
</feature>
<feature type="binding site" evidence="1">
    <location>
        <begin position="106"/>
        <end position="116"/>
    </location>
    <ligand>
        <name>ATP</name>
        <dbReference type="ChEBI" id="CHEBI:30616"/>
    </ligand>
</feature>
<protein>
    <recommendedName>
        <fullName evidence="1">4-diphosphocytidyl-2-C-methyl-D-erythritol kinase</fullName>
        <shortName evidence="1">CMK</shortName>
        <ecNumber evidence="1">2.7.1.148</ecNumber>
    </recommendedName>
    <alternativeName>
        <fullName evidence="1">4-(cytidine-5'-diphospho)-2-C-methyl-D-erythritol kinase</fullName>
    </alternativeName>
</protein>
<keyword id="KW-0067">ATP-binding</keyword>
<keyword id="KW-0414">Isoprene biosynthesis</keyword>
<keyword id="KW-0418">Kinase</keyword>
<keyword id="KW-0547">Nucleotide-binding</keyword>
<keyword id="KW-1185">Reference proteome</keyword>
<keyword id="KW-0808">Transferase</keyword>